<dbReference type="EMBL" id="D21057">
    <property type="protein sequence ID" value="BAA04636.1"/>
    <property type="molecule type" value="mRNA"/>
</dbReference>
<dbReference type="EMBL" id="AF021138">
    <property type="protein sequence ID" value="AAB88796.1"/>
    <property type="molecule type" value="mRNA"/>
</dbReference>
<dbReference type="PIR" id="S41087">
    <property type="entry name" value="S41087"/>
</dbReference>
<dbReference type="RefSeq" id="NP_001075667.1">
    <property type="nucleotide sequence ID" value="NM_001082198.1"/>
</dbReference>
<dbReference type="RefSeq" id="XP_017204295.1">
    <property type="nucleotide sequence ID" value="XM_017348806.3"/>
</dbReference>
<dbReference type="RefSeq" id="XP_017204296.1">
    <property type="nucleotide sequence ID" value="XM_017348807.1"/>
</dbReference>
<dbReference type="SMR" id="P49656"/>
<dbReference type="FunCoup" id="P49656">
    <property type="interactions" value="164"/>
</dbReference>
<dbReference type="STRING" id="9986.ENSOCUP00000008971"/>
<dbReference type="PaxDb" id="9986-ENSOCUP00000008971"/>
<dbReference type="Ensembl" id="ENSOCUT00000010415.2">
    <property type="protein sequence ID" value="ENSOCUP00000008971.2"/>
    <property type="gene ID" value="ENSOCUG00000010416.2"/>
</dbReference>
<dbReference type="GeneID" id="100008987"/>
<dbReference type="KEGG" id="ocu:100008987"/>
<dbReference type="CTD" id="3759"/>
<dbReference type="eggNOG" id="KOG3827">
    <property type="taxonomic scope" value="Eukaryota"/>
</dbReference>
<dbReference type="GeneTree" id="ENSGT01030000234586"/>
<dbReference type="HOGENOM" id="CLU_022738_3_0_1"/>
<dbReference type="InParanoid" id="P49656"/>
<dbReference type="OMA" id="THPEMDH"/>
<dbReference type="OrthoDB" id="273257at2759"/>
<dbReference type="TreeFam" id="TF313676"/>
<dbReference type="Proteomes" id="UP000001811">
    <property type="component" value="Chromosome 19"/>
</dbReference>
<dbReference type="Bgee" id="ENSOCUG00000010416">
    <property type="expression patterns" value="Expressed in heart and 14 other cell types or tissues"/>
</dbReference>
<dbReference type="GO" id="GO:0016020">
    <property type="term" value="C:membrane"/>
    <property type="evidence" value="ECO:0000250"/>
    <property type="project" value="UniProtKB"/>
</dbReference>
<dbReference type="GO" id="GO:0030315">
    <property type="term" value="C:T-tubule"/>
    <property type="evidence" value="ECO:0000250"/>
    <property type="project" value="UniProtKB"/>
</dbReference>
<dbReference type="GO" id="GO:0008076">
    <property type="term" value="C:voltage-gated potassium channel complex"/>
    <property type="evidence" value="ECO:0007669"/>
    <property type="project" value="Ensembl"/>
</dbReference>
<dbReference type="GO" id="GO:0042802">
    <property type="term" value="F:identical protein binding"/>
    <property type="evidence" value="ECO:0007669"/>
    <property type="project" value="Ensembl"/>
</dbReference>
<dbReference type="GO" id="GO:0005242">
    <property type="term" value="F:inward rectifier potassium channel activity"/>
    <property type="evidence" value="ECO:0000314"/>
    <property type="project" value="UniProtKB"/>
</dbReference>
<dbReference type="GO" id="GO:0005546">
    <property type="term" value="F:phosphatidylinositol-4,5-bisphosphate binding"/>
    <property type="evidence" value="ECO:0000250"/>
    <property type="project" value="UniProtKB"/>
</dbReference>
<dbReference type="GO" id="GO:0086008">
    <property type="term" value="F:voltage-gated potassium channel activity involved in cardiac muscle cell action potential repolarization"/>
    <property type="evidence" value="ECO:0007669"/>
    <property type="project" value="Ensembl"/>
</dbReference>
<dbReference type="GO" id="GO:0086002">
    <property type="term" value="P:cardiac muscle cell action potential involved in contraction"/>
    <property type="evidence" value="ECO:0007669"/>
    <property type="project" value="Ensembl"/>
</dbReference>
<dbReference type="GO" id="GO:0015693">
    <property type="term" value="P:magnesium ion transport"/>
    <property type="evidence" value="ECO:0007669"/>
    <property type="project" value="Ensembl"/>
</dbReference>
<dbReference type="GO" id="GO:1990573">
    <property type="term" value="P:potassium ion import across plasma membrane"/>
    <property type="evidence" value="ECO:0007669"/>
    <property type="project" value="Ensembl"/>
</dbReference>
<dbReference type="GO" id="GO:0006813">
    <property type="term" value="P:potassium ion transport"/>
    <property type="evidence" value="ECO:0000250"/>
    <property type="project" value="UniProtKB"/>
</dbReference>
<dbReference type="GO" id="GO:0051289">
    <property type="term" value="P:protein homotetramerization"/>
    <property type="evidence" value="ECO:0000250"/>
    <property type="project" value="UniProtKB"/>
</dbReference>
<dbReference type="GO" id="GO:0086091">
    <property type="term" value="P:regulation of heart rate by cardiac conduction"/>
    <property type="evidence" value="ECO:0007669"/>
    <property type="project" value="Ensembl"/>
</dbReference>
<dbReference type="GO" id="GO:0060306">
    <property type="term" value="P:regulation of membrane repolarization"/>
    <property type="evidence" value="ECO:0007669"/>
    <property type="project" value="Ensembl"/>
</dbReference>
<dbReference type="GO" id="GO:0034765">
    <property type="term" value="P:regulation of monoatomic ion transmembrane transport"/>
    <property type="evidence" value="ECO:0007669"/>
    <property type="project" value="TreeGrafter"/>
</dbReference>
<dbReference type="GO" id="GO:0014861">
    <property type="term" value="P:regulation of skeletal muscle contraction via regulation of action potential"/>
    <property type="evidence" value="ECO:0007669"/>
    <property type="project" value="Ensembl"/>
</dbReference>
<dbReference type="GO" id="GO:0055119">
    <property type="term" value="P:relaxation of cardiac muscle"/>
    <property type="evidence" value="ECO:0007669"/>
    <property type="project" value="Ensembl"/>
</dbReference>
<dbReference type="GO" id="GO:0090076">
    <property type="term" value="P:relaxation of skeletal muscle"/>
    <property type="evidence" value="ECO:0007669"/>
    <property type="project" value="Ensembl"/>
</dbReference>
<dbReference type="FunFam" id="1.10.287.70:FF:000039">
    <property type="entry name" value="ATP-sensitive inward rectifier potassium channel 12"/>
    <property type="match status" value="1"/>
</dbReference>
<dbReference type="FunFam" id="2.60.40.1400:FF:000001">
    <property type="entry name" value="G protein-activated inward rectifier potassium channel 2"/>
    <property type="match status" value="1"/>
</dbReference>
<dbReference type="Gene3D" id="1.10.287.70">
    <property type="match status" value="1"/>
</dbReference>
<dbReference type="Gene3D" id="2.60.40.1400">
    <property type="entry name" value="G protein-activated inward rectifier potassium channel 1"/>
    <property type="match status" value="1"/>
</dbReference>
<dbReference type="InterPro" id="IPR014756">
    <property type="entry name" value="Ig_E-set"/>
</dbReference>
<dbReference type="InterPro" id="IPR041647">
    <property type="entry name" value="IRK_C"/>
</dbReference>
<dbReference type="InterPro" id="IPR016449">
    <property type="entry name" value="K_chnl_inward-rec_Kir"/>
</dbReference>
<dbReference type="InterPro" id="IPR003271">
    <property type="entry name" value="K_chnl_inward-rec_Kir2.1"/>
</dbReference>
<dbReference type="InterPro" id="IPR013518">
    <property type="entry name" value="K_chnl_inward-rec_Kir_cyto"/>
</dbReference>
<dbReference type="InterPro" id="IPR013673">
    <property type="entry name" value="K_chnl_inward-rec_Kir_N"/>
</dbReference>
<dbReference type="InterPro" id="IPR040445">
    <property type="entry name" value="Kir_TM"/>
</dbReference>
<dbReference type="PANTHER" id="PTHR11767">
    <property type="entry name" value="INWARD RECTIFIER POTASSIUM CHANNEL"/>
    <property type="match status" value="1"/>
</dbReference>
<dbReference type="PANTHER" id="PTHR11767:SF43">
    <property type="entry name" value="INWARD RECTIFIER POTASSIUM CHANNEL 2"/>
    <property type="match status" value="1"/>
</dbReference>
<dbReference type="Pfam" id="PF01007">
    <property type="entry name" value="IRK"/>
    <property type="match status" value="1"/>
</dbReference>
<dbReference type="Pfam" id="PF17655">
    <property type="entry name" value="IRK_C"/>
    <property type="match status" value="1"/>
</dbReference>
<dbReference type="Pfam" id="PF08466">
    <property type="entry name" value="IRK_N"/>
    <property type="match status" value="1"/>
</dbReference>
<dbReference type="PIRSF" id="PIRSF005465">
    <property type="entry name" value="GIRK_kir"/>
    <property type="match status" value="1"/>
</dbReference>
<dbReference type="PRINTS" id="PR01324">
    <property type="entry name" value="KIR21CHANNEL"/>
</dbReference>
<dbReference type="PRINTS" id="PR01320">
    <property type="entry name" value="KIRCHANNEL"/>
</dbReference>
<dbReference type="SUPFAM" id="SSF81296">
    <property type="entry name" value="E set domains"/>
    <property type="match status" value="1"/>
</dbReference>
<dbReference type="SUPFAM" id="SSF81324">
    <property type="entry name" value="Voltage-gated potassium channels"/>
    <property type="match status" value="1"/>
</dbReference>
<feature type="chain" id="PRO_0000154927" description="Inward rectifier potassium channel 2">
    <location>
        <begin position="1"/>
        <end position="427"/>
    </location>
</feature>
<feature type="topological domain" description="Cytoplasmic" evidence="1">
    <location>
        <begin position="1"/>
        <end position="81"/>
    </location>
</feature>
<feature type="transmembrane region" description="Helical; Name=M1" evidence="1">
    <location>
        <begin position="82"/>
        <end position="106"/>
    </location>
</feature>
<feature type="topological domain" description="Extracellular" evidence="1">
    <location>
        <begin position="107"/>
        <end position="128"/>
    </location>
</feature>
<feature type="intramembrane region" description="Helical; Pore-forming; Name=H5" evidence="1">
    <location>
        <begin position="129"/>
        <end position="140"/>
    </location>
</feature>
<feature type="intramembrane region" description="Pore-forming" evidence="1">
    <location>
        <begin position="141"/>
        <end position="147"/>
    </location>
</feature>
<feature type="topological domain" description="Extracellular" evidence="1">
    <location>
        <begin position="148"/>
        <end position="156"/>
    </location>
</feature>
<feature type="transmembrane region" description="Helical; Name=M2" evidence="1">
    <location>
        <begin position="157"/>
        <end position="178"/>
    </location>
</feature>
<feature type="topological domain" description="Cytoplasmic" evidence="1">
    <location>
        <begin position="179"/>
        <end position="427"/>
    </location>
</feature>
<feature type="region of interest" description="Polyphosphoinositide (PIP2)-binding" evidence="4">
    <location>
        <begin position="181"/>
        <end position="208"/>
    </location>
</feature>
<feature type="region of interest" description="Disordered" evidence="6">
    <location>
        <begin position="384"/>
        <end position="427"/>
    </location>
</feature>
<feature type="short sequence motif" description="Selectivity filter" evidence="1">
    <location>
        <begin position="142"/>
        <end position="147"/>
    </location>
</feature>
<feature type="short sequence motif" description="PDZ-binding" evidence="5">
    <location>
        <begin position="425"/>
        <end position="427"/>
    </location>
</feature>
<feature type="site" description="Role in the control of polyamine-mediated channel gating and in the blocking by intracellular magnesium" evidence="1">
    <location>
        <position position="172"/>
    </location>
</feature>
<feature type="modified residue" description="S-nitrosocysteine" evidence="3">
    <location>
        <position position="76"/>
    </location>
</feature>
<sequence>MGSVRTNRYSIVSSEEDGMKLATMAVANGFGNGKSKVHTRQQCRSRFVKKDGHCNVQFINVGEKGQRYLADIFTTCVDIRWRWMLVIFCLAFVLSWLFFGCVFWLIALLHGDLDASRESKACVSEVNSFTAAFLFSIETQTTIGYGFRCVTDECPVAVFMVVFQSIVGCIIDAFIIGAVMAKMAKPKKRNETLVFSHNAVIAMRDGKLCLMWRVGNLRKSHLVEAHVRAQLLKSRITSEGEYIPLDQIDINVGFDSGIDRIFLVSPITIVHEIDEDSPLYDLSKQDMDNADFEIVVILEGMVEATAMTTQCRSSYLANEILWGHRYEPVLFEEKHYYKVDYSRFHKTYEVPNTPLCSARDLAEKKYILSNANSFCYENEVALTSKEEDDSENGVPESTSTDTPPDIDLHNQASVPLEPRPLRRESEI</sequence>
<evidence type="ECO:0000250" key="1"/>
<evidence type="ECO:0000250" key="2">
    <source>
        <dbReference type="UniProtKB" id="O19182"/>
    </source>
</evidence>
<evidence type="ECO:0000250" key="3">
    <source>
        <dbReference type="UniProtKB" id="P63252"/>
    </source>
</evidence>
<evidence type="ECO:0000250" key="4">
    <source>
        <dbReference type="UniProtKB" id="Q64273"/>
    </source>
</evidence>
<evidence type="ECO:0000255" key="5"/>
<evidence type="ECO:0000256" key="6">
    <source>
        <dbReference type="SAM" id="MobiDB-lite"/>
    </source>
</evidence>
<evidence type="ECO:0000269" key="7">
    <source>
    </source>
</evidence>
<evidence type="ECO:0000269" key="8">
    <source>
    </source>
</evidence>
<evidence type="ECO:0000305" key="9"/>
<accession>P49656</accession>
<protein>
    <recommendedName>
        <fullName>Inward rectifier potassium channel 2</fullName>
    </recommendedName>
    <alternativeName>
        <fullName>Inward rectifier K(+) channel Kir2.1</fullName>
        <shortName>IRK-1</shortName>
    </alternativeName>
    <alternativeName>
        <fullName>Potassium channel, inwardly rectifying subfamily J member 2</fullName>
    </alternativeName>
</protein>
<reference key="1">
    <citation type="journal article" date="1994" name="FEBS Lett.">
        <title>Cloning and functional expression of a cardiac inward rectifier K+ channel.</title>
        <authorList>
            <person name="Ishii K."/>
            <person name="Yamagishi T."/>
            <person name="Taira N."/>
        </authorList>
    </citation>
    <scope>NUCLEOTIDE SEQUENCE [MRNA]</scope>
    <scope>FUNCTION</scope>
    <scope>TRANSPORTER ACTIVITY</scope>
    <source>
        <strain>New Zealand white</strain>
        <tissue>Heart</tissue>
    </source>
</reference>
<reference key="2">
    <citation type="journal article" date="1998" name="Exp. Eye Res.">
        <title>Inwardly rectifying potassium channels in lens epithelium are from the IRK1 (Kir 2.1) family.</title>
        <authorList>
            <person name="Rae J.L."/>
            <person name="Shepard A.R."/>
        </authorList>
    </citation>
    <scope>NUCLEOTIDE SEQUENCE [MRNA]</scope>
    <scope>FUNCTION</scope>
    <scope>TRANSPORTER ACTIVITY</scope>
    <source>
        <strain>New Zealand white</strain>
        <tissue>Lens epithelium</tissue>
    </source>
</reference>
<name>KCNJ2_RABIT</name>
<organism>
    <name type="scientific">Oryctolagus cuniculus</name>
    <name type="common">Rabbit</name>
    <dbReference type="NCBI Taxonomy" id="9986"/>
    <lineage>
        <taxon>Eukaryota</taxon>
        <taxon>Metazoa</taxon>
        <taxon>Chordata</taxon>
        <taxon>Craniata</taxon>
        <taxon>Vertebrata</taxon>
        <taxon>Euteleostomi</taxon>
        <taxon>Mammalia</taxon>
        <taxon>Eutheria</taxon>
        <taxon>Euarchontoglires</taxon>
        <taxon>Glires</taxon>
        <taxon>Lagomorpha</taxon>
        <taxon>Leporidae</taxon>
        <taxon>Oryctolagus</taxon>
    </lineage>
</organism>
<comment type="function">
    <text evidence="3 7 8">Inward rectifier potassium channels are characterized by a greater tendency to allow potassium to flow into the cell rather than out of it. Their voltage dependence is regulated by the concentration of extracellular potassium; as external potassium is raised, the voltage range of the channel opening shifts to more positive voltages. The inward rectification is mainly due to the blockage of outward current by internal magnesium (PubMed:8307148, PubMed:9533862). Can be blocked by extracellular barium and cesium (PubMed:8307148). Probably participates in establishing action potential waveform and excitability of neuronal and muscle tissues (By similarity).</text>
</comment>
<comment type="catalytic activity">
    <reaction evidence="7 8">
        <text>K(+)(in) = K(+)(out)</text>
        <dbReference type="Rhea" id="RHEA:29463"/>
        <dbReference type="ChEBI" id="CHEBI:29103"/>
    </reaction>
</comment>
<comment type="activity regulation">
    <text evidence="4">Activated by phosphatidylinositol 4,5 biphosphate (PtdIns(4,5)P2).</text>
</comment>
<comment type="subunit">
    <text evidence="3 4">Homotetramer. Homomultimeric and heteromultimeric association with KCNJ4/Kir2.3. Can form heteromeric channels with Kir2.6/KCNJ18 (By similarity). Associates, via its PDZ-recognition domain, with a complex containing LIN7A, LIN7B, LIN7C, DLG1, CASK and APBA1.</text>
</comment>
<comment type="subcellular location">
    <subcellularLocation>
        <location evidence="2">Cell membrane</location>
        <topology evidence="5">Multi-pass membrane protein</topology>
    </subcellularLocation>
    <subcellularLocation>
        <location evidence="4">Cell membrane</location>
        <location evidence="4">Sarcolemma</location>
        <location evidence="4">T-tubule</location>
    </subcellularLocation>
</comment>
<comment type="tissue specificity">
    <text>Highly expressed in the ventricle and skeletal muscle, moderately in cerebrum and cerebellum. Only low levels are detected in kidney or lung.</text>
</comment>
<comment type="PTM">
    <text evidence="3">S-nitrosylation increases the open probability and inward rectifying currents.</text>
</comment>
<comment type="similarity">
    <text evidence="9">Belongs to the inward rectifier-type potassium channel (TC 1.A.2.1) family. KCNJ2 subfamily.</text>
</comment>
<proteinExistence type="evidence at transcript level"/>
<keyword id="KW-1003">Cell membrane</keyword>
<keyword id="KW-0407">Ion channel</keyword>
<keyword id="KW-0406">Ion transport</keyword>
<keyword id="KW-0472">Membrane</keyword>
<keyword id="KW-0630">Potassium</keyword>
<keyword id="KW-0633">Potassium transport</keyword>
<keyword id="KW-1185">Reference proteome</keyword>
<keyword id="KW-0702">S-nitrosylation</keyword>
<keyword id="KW-0812">Transmembrane</keyword>
<keyword id="KW-1133">Transmembrane helix</keyword>
<keyword id="KW-0813">Transport</keyword>
<keyword id="KW-0851">Voltage-gated channel</keyword>
<gene>
    <name type="primary">KCNJ2</name>
    <name type="synonym">IRK1</name>
</gene>